<keyword id="KW-0032">Aminotransferase</keyword>
<keyword id="KW-0046">Antibiotic resistance</keyword>
<keyword id="KW-0441">Lipid A biosynthesis</keyword>
<keyword id="KW-0444">Lipid biosynthesis</keyword>
<keyword id="KW-0443">Lipid metabolism</keyword>
<keyword id="KW-0448">Lipopolysaccharide biosynthesis</keyword>
<keyword id="KW-0663">Pyridoxal phosphate</keyword>
<keyword id="KW-1185">Reference proteome</keyword>
<keyword id="KW-0808">Transferase</keyword>
<name>ARNB_ECO27</name>
<proteinExistence type="inferred from homology"/>
<accession>B7UFR5</accession>
<comment type="function">
    <text evidence="1">Catalyzes the conversion of UDP-4-keto-arabinose (UDP-Ara4O) to UDP-4-amino-4-deoxy-L-arabinose (UDP-L-Ara4N). The modified arabinose is attached to lipid A and is required for resistance to polymyxin and cationic antimicrobial peptides.</text>
</comment>
<comment type="catalytic activity">
    <reaction evidence="1">
        <text>UDP-4-amino-4-deoxy-beta-L-arabinose + 2-oxoglutarate = UDP-beta-L-threo-pentopyranos-4-ulose + L-glutamate</text>
        <dbReference type="Rhea" id="RHEA:24710"/>
        <dbReference type="ChEBI" id="CHEBI:16810"/>
        <dbReference type="ChEBI" id="CHEBI:29985"/>
        <dbReference type="ChEBI" id="CHEBI:58708"/>
        <dbReference type="ChEBI" id="CHEBI:58710"/>
        <dbReference type="EC" id="2.6.1.87"/>
    </reaction>
</comment>
<comment type="cofactor">
    <cofactor evidence="1">
        <name>pyridoxal 5'-phosphate</name>
        <dbReference type="ChEBI" id="CHEBI:597326"/>
    </cofactor>
</comment>
<comment type="pathway">
    <text evidence="1">Nucleotide-sugar biosynthesis; UDP-4-deoxy-4-formamido-beta-L-arabinose biosynthesis; UDP-4-deoxy-4-formamido-beta-L-arabinose from UDP-alpha-D-glucuronate: step 2/3.</text>
</comment>
<comment type="pathway">
    <text evidence="1">Bacterial outer membrane biogenesis; lipopolysaccharide biosynthesis.</text>
</comment>
<comment type="subunit">
    <text evidence="1">Homodimer.</text>
</comment>
<comment type="similarity">
    <text evidence="1">Belongs to the DegT/DnrJ/EryC1 family. ArnB subfamily.</text>
</comment>
<comment type="sequence caution" evidence="2">
    <conflict type="erroneous initiation">
        <sequence resource="EMBL-CDS" id="CAS09945"/>
    </conflict>
</comment>
<protein>
    <recommendedName>
        <fullName evidence="1">UDP-4-amino-4-deoxy-L-arabinose--oxoglutarate aminotransferase</fullName>
        <ecNumber evidence="1">2.6.1.87</ecNumber>
    </recommendedName>
    <alternativeName>
        <fullName evidence="1">UDP-(beta-L-threo-pentapyranosyl-4''-ulose diphosphate) aminotransferase</fullName>
        <shortName evidence="1">UDP-Ara4O aminotransferase</shortName>
    </alternativeName>
    <alternativeName>
        <fullName evidence="1">UDP-4-amino-4-deoxy-L-arabinose aminotransferase</fullName>
    </alternativeName>
</protein>
<sequence>MSGFLPFSRPAMGVEELAAVKEVLESGWITTGPKNQALEQAFCQLTGNQHAIAVSSATAGMHITLMALEIGKGDEVITPSLTWVSTLNMISLLGATPVMVDVDRDTLMVTPEVIEAAITPRTKAIIPVHYAGAPADIDAIRAIGERYGIAVIEDAAHAVGTYYKGRHIGAKGTAIFSFHAIKNITCAEGGLIVTDNENLARQLRMLKFHGLGVDAYDRHTWGRAPQAEVLTPGYKYNLTDINAAIALTQLVKLEHLNTRRREIAQQYQQALAALPFQPLSLPAWPHVHAWHLFIIRVDEQRCGISRDALMEALKEIGIGTGLHFRAAHTQKYYRERFPTLSLPNTEWNSERICSLPLFPDMTTADADRVITALQQLAGQ</sequence>
<evidence type="ECO:0000255" key="1">
    <source>
        <dbReference type="HAMAP-Rule" id="MF_01167"/>
    </source>
</evidence>
<evidence type="ECO:0000305" key="2"/>
<dbReference type="EC" id="2.6.1.87" evidence="1"/>
<dbReference type="EMBL" id="FM180568">
    <property type="protein sequence ID" value="CAS09945.1"/>
    <property type="status" value="ALT_INIT"/>
    <property type="molecule type" value="Genomic_DNA"/>
</dbReference>
<dbReference type="RefSeq" id="WP_000012640.1">
    <property type="nucleotide sequence ID" value="NC_011601.1"/>
</dbReference>
<dbReference type="SMR" id="B7UFR5"/>
<dbReference type="KEGG" id="ecg:E2348C_2397"/>
<dbReference type="HOGENOM" id="CLU_033332_0_3_6"/>
<dbReference type="UniPathway" id="UPA00030"/>
<dbReference type="UniPathway" id="UPA00032">
    <property type="reaction ID" value="UER00493"/>
</dbReference>
<dbReference type="Proteomes" id="UP000008205">
    <property type="component" value="Chromosome"/>
</dbReference>
<dbReference type="GO" id="GO:0016020">
    <property type="term" value="C:membrane"/>
    <property type="evidence" value="ECO:0007669"/>
    <property type="project" value="GOC"/>
</dbReference>
<dbReference type="GO" id="GO:0030170">
    <property type="term" value="F:pyridoxal phosphate binding"/>
    <property type="evidence" value="ECO:0007669"/>
    <property type="project" value="TreeGrafter"/>
</dbReference>
<dbReference type="GO" id="GO:0099620">
    <property type="term" value="F:UDP-4-amino-4-deoxy-L-arabinose aminotransferase"/>
    <property type="evidence" value="ECO:0007669"/>
    <property type="project" value="UniProtKB-EC"/>
</dbReference>
<dbReference type="GO" id="GO:0009245">
    <property type="term" value="P:lipid A biosynthetic process"/>
    <property type="evidence" value="ECO:0007669"/>
    <property type="project" value="UniProtKB-KW"/>
</dbReference>
<dbReference type="GO" id="GO:0009103">
    <property type="term" value="P:lipopolysaccharide biosynthetic process"/>
    <property type="evidence" value="ECO:0007669"/>
    <property type="project" value="UniProtKB-UniRule"/>
</dbReference>
<dbReference type="GO" id="GO:0046677">
    <property type="term" value="P:response to antibiotic"/>
    <property type="evidence" value="ECO:0007669"/>
    <property type="project" value="UniProtKB-KW"/>
</dbReference>
<dbReference type="CDD" id="cd00616">
    <property type="entry name" value="AHBA_syn"/>
    <property type="match status" value="1"/>
</dbReference>
<dbReference type="FunFam" id="3.40.640.10:FF:000040">
    <property type="entry name" value="UDP-4-amino-4-deoxy-L-arabinose--oxoglutarate aminotransferase"/>
    <property type="match status" value="1"/>
</dbReference>
<dbReference type="FunFam" id="3.90.1150.10:FF:000030">
    <property type="entry name" value="UDP-4-amino-4-deoxy-L-arabinose--oxoglutarate aminotransferase"/>
    <property type="match status" value="1"/>
</dbReference>
<dbReference type="Gene3D" id="3.90.1150.10">
    <property type="entry name" value="Aspartate Aminotransferase, domain 1"/>
    <property type="match status" value="1"/>
</dbReference>
<dbReference type="Gene3D" id="3.40.640.10">
    <property type="entry name" value="Type I PLP-dependent aspartate aminotransferase-like (Major domain)"/>
    <property type="match status" value="1"/>
</dbReference>
<dbReference type="HAMAP" id="MF_01167">
    <property type="entry name" value="ArnB_transfer"/>
    <property type="match status" value="1"/>
</dbReference>
<dbReference type="InterPro" id="IPR022850">
    <property type="entry name" value="ArnB_NH2Trfase"/>
</dbReference>
<dbReference type="InterPro" id="IPR000653">
    <property type="entry name" value="DegT/StrS_aminotransferase"/>
</dbReference>
<dbReference type="InterPro" id="IPR015424">
    <property type="entry name" value="PyrdxlP-dep_Trfase"/>
</dbReference>
<dbReference type="InterPro" id="IPR015421">
    <property type="entry name" value="PyrdxlP-dep_Trfase_major"/>
</dbReference>
<dbReference type="InterPro" id="IPR015422">
    <property type="entry name" value="PyrdxlP-dep_Trfase_small"/>
</dbReference>
<dbReference type="NCBIfam" id="NF008658">
    <property type="entry name" value="PRK11658.1"/>
    <property type="match status" value="1"/>
</dbReference>
<dbReference type="PANTHER" id="PTHR30244">
    <property type="entry name" value="TRANSAMINASE"/>
    <property type="match status" value="1"/>
</dbReference>
<dbReference type="PANTHER" id="PTHR30244:SF41">
    <property type="entry name" value="UDP-4-AMINO-4-DEOXY-L-ARABINOSE--OXOGLUTARATE AMINOTRANSFERASE"/>
    <property type="match status" value="1"/>
</dbReference>
<dbReference type="Pfam" id="PF01041">
    <property type="entry name" value="DegT_DnrJ_EryC1"/>
    <property type="match status" value="1"/>
</dbReference>
<dbReference type="PIRSF" id="PIRSF000390">
    <property type="entry name" value="PLP_StrS"/>
    <property type="match status" value="1"/>
</dbReference>
<dbReference type="SUPFAM" id="SSF53383">
    <property type="entry name" value="PLP-dependent transferases"/>
    <property type="match status" value="1"/>
</dbReference>
<reference key="1">
    <citation type="journal article" date="2009" name="J. Bacteriol.">
        <title>Complete genome sequence and comparative genome analysis of enteropathogenic Escherichia coli O127:H6 strain E2348/69.</title>
        <authorList>
            <person name="Iguchi A."/>
            <person name="Thomson N.R."/>
            <person name="Ogura Y."/>
            <person name="Saunders D."/>
            <person name="Ooka T."/>
            <person name="Henderson I.R."/>
            <person name="Harris D."/>
            <person name="Asadulghani M."/>
            <person name="Kurokawa K."/>
            <person name="Dean P."/>
            <person name="Kenny B."/>
            <person name="Quail M.A."/>
            <person name="Thurston S."/>
            <person name="Dougan G."/>
            <person name="Hayashi T."/>
            <person name="Parkhill J."/>
            <person name="Frankel G."/>
        </authorList>
    </citation>
    <scope>NUCLEOTIDE SEQUENCE [LARGE SCALE GENOMIC DNA]</scope>
    <source>
        <strain>E2348/69 / EPEC</strain>
    </source>
</reference>
<organism>
    <name type="scientific">Escherichia coli O127:H6 (strain E2348/69 / EPEC)</name>
    <dbReference type="NCBI Taxonomy" id="574521"/>
    <lineage>
        <taxon>Bacteria</taxon>
        <taxon>Pseudomonadati</taxon>
        <taxon>Pseudomonadota</taxon>
        <taxon>Gammaproteobacteria</taxon>
        <taxon>Enterobacterales</taxon>
        <taxon>Enterobacteriaceae</taxon>
        <taxon>Escherichia</taxon>
    </lineage>
</organism>
<gene>
    <name evidence="1" type="primary">arnB</name>
    <name type="ordered locus">E2348C_2397</name>
</gene>
<feature type="chain" id="PRO_0000380522" description="UDP-4-amino-4-deoxy-L-arabinose--oxoglutarate aminotransferase">
    <location>
        <begin position="1"/>
        <end position="379"/>
    </location>
</feature>
<feature type="modified residue" description="N6-(pyridoxal phosphate)lysine" evidence="1">
    <location>
        <position position="182"/>
    </location>
</feature>